<organism>
    <name type="scientific">Cereibacter sphaeroides (strain ATCC 17029 / ATH 2.4.9)</name>
    <name type="common">Rhodobacter sphaeroides</name>
    <dbReference type="NCBI Taxonomy" id="349101"/>
    <lineage>
        <taxon>Bacteria</taxon>
        <taxon>Pseudomonadati</taxon>
        <taxon>Pseudomonadota</taxon>
        <taxon>Alphaproteobacteria</taxon>
        <taxon>Rhodobacterales</taxon>
        <taxon>Paracoccaceae</taxon>
        <taxon>Cereibacter</taxon>
    </lineage>
</organism>
<accession>A3PJ80</accession>
<protein>
    <recommendedName>
        <fullName evidence="1">Methylenetetrahydrofolate--tRNA-(uracil-5-)-methyltransferase TrmFO</fullName>
        <ecNumber evidence="1">2.1.1.74</ecNumber>
    </recommendedName>
    <alternativeName>
        <fullName evidence="1">Folate-dependent tRNA (uracil-5-)-methyltransferase</fullName>
    </alternativeName>
    <alternativeName>
        <fullName evidence="1">Folate-dependent tRNA(M-5-U54)-methyltransferase</fullName>
    </alternativeName>
</protein>
<gene>
    <name evidence="1" type="primary">trmFO</name>
    <name type="synonym">gid</name>
    <name type="ordered locus">Rsph17029_1286</name>
</gene>
<comment type="function">
    <text evidence="1">Catalyzes the folate-dependent formation of 5-methyl-uridine at position 54 (M-5-U54) in all tRNAs.</text>
</comment>
<comment type="catalytic activity">
    <reaction evidence="1">
        <text>uridine(54) in tRNA + (6R)-5,10-methylene-5,6,7,8-tetrahydrofolate + NADH + H(+) = 5-methyluridine(54) in tRNA + (6S)-5,6,7,8-tetrahydrofolate + NAD(+)</text>
        <dbReference type="Rhea" id="RHEA:16873"/>
        <dbReference type="Rhea" id="RHEA-COMP:10167"/>
        <dbReference type="Rhea" id="RHEA-COMP:10193"/>
        <dbReference type="ChEBI" id="CHEBI:15378"/>
        <dbReference type="ChEBI" id="CHEBI:15636"/>
        <dbReference type="ChEBI" id="CHEBI:57453"/>
        <dbReference type="ChEBI" id="CHEBI:57540"/>
        <dbReference type="ChEBI" id="CHEBI:57945"/>
        <dbReference type="ChEBI" id="CHEBI:65315"/>
        <dbReference type="ChEBI" id="CHEBI:74447"/>
        <dbReference type="EC" id="2.1.1.74"/>
    </reaction>
</comment>
<comment type="catalytic activity">
    <reaction evidence="1">
        <text>uridine(54) in tRNA + (6R)-5,10-methylene-5,6,7,8-tetrahydrofolate + NADPH + H(+) = 5-methyluridine(54) in tRNA + (6S)-5,6,7,8-tetrahydrofolate + NADP(+)</text>
        <dbReference type="Rhea" id="RHEA:62372"/>
        <dbReference type="Rhea" id="RHEA-COMP:10167"/>
        <dbReference type="Rhea" id="RHEA-COMP:10193"/>
        <dbReference type="ChEBI" id="CHEBI:15378"/>
        <dbReference type="ChEBI" id="CHEBI:15636"/>
        <dbReference type="ChEBI" id="CHEBI:57453"/>
        <dbReference type="ChEBI" id="CHEBI:57783"/>
        <dbReference type="ChEBI" id="CHEBI:58349"/>
        <dbReference type="ChEBI" id="CHEBI:65315"/>
        <dbReference type="ChEBI" id="CHEBI:74447"/>
        <dbReference type="EC" id="2.1.1.74"/>
    </reaction>
</comment>
<comment type="cofactor">
    <cofactor evidence="1">
        <name>FAD</name>
        <dbReference type="ChEBI" id="CHEBI:57692"/>
    </cofactor>
</comment>
<comment type="subcellular location">
    <subcellularLocation>
        <location evidence="1">Cytoplasm</location>
    </subcellularLocation>
</comment>
<comment type="similarity">
    <text evidence="1">Belongs to the MnmG family. TrmFO subfamily.</text>
</comment>
<proteinExistence type="inferred from homology"/>
<dbReference type="EC" id="2.1.1.74" evidence="1"/>
<dbReference type="EMBL" id="CP000577">
    <property type="protein sequence ID" value="ABN76396.1"/>
    <property type="molecule type" value="Genomic_DNA"/>
</dbReference>
<dbReference type="RefSeq" id="WP_011840920.1">
    <property type="nucleotide sequence ID" value="NC_009049.1"/>
</dbReference>
<dbReference type="SMR" id="A3PJ80"/>
<dbReference type="KEGG" id="rsh:Rsph17029_1286"/>
<dbReference type="HOGENOM" id="CLU_033057_1_0_5"/>
<dbReference type="GO" id="GO:0005829">
    <property type="term" value="C:cytosol"/>
    <property type="evidence" value="ECO:0007669"/>
    <property type="project" value="TreeGrafter"/>
</dbReference>
<dbReference type="GO" id="GO:0050660">
    <property type="term" value="F:flavin adenine dinucleotide binding"/>
    <property type="evidence" value="ECO:0007669"/>
    <property type="project" value="UniProtKB-UniRule"/>
</dbReference>
<dbReference type="GO" id="GO:0047151">
    <property type="term" value="F:tRNA (uracil(54)-C5)-methyltransferase activity, 5,10-methylenetetrahydrofolate-dependent"/>
    <property type="evidence" value="ECO:0007669"/>
    <property type="project" value="UniProtKB-UniRule"/>
</dbReference>
<dbReference type="GO" id="GO:0030488">
    <property type="term" value="P:tRNA methylation"/>
    <property type="evidence" value="ECO:0007669"/>
    <property type="project" value="TreeGrafter"/>
</dbReference>
<dbReference type="GO" id="GO:0002098">
    <property type="term" value="P:tRNA wobble uridine modification"/>
    <property type="evidence" value="ECO:0007669"/>
    <property type="project" value="TreeGrafter"/>
</dbReference>
<dbReference type="Gene3D" id="3.50.50.60">
    <property type="entry name" value="FAD/NAD(P)-binding domain"/>
    <property type="match status" value="2"/>
</dbReference>
<dbReference type="HAMAP" id="MF_01037">
    <property type="entry name" value="TrmFO"/>
    <property type="match status" value="1"/>
</dbReference>
<dbReference type="InterPro" id="IPR036188">
    <property type="entry name" value="FAD/NAD-bd_sf"/>
</dbReference>
<dbReference type="InterPro" id="IPR002218">
    <property type="entry name" value="MnmG-rel"/>
</dbReference>
<dbReference type="InterPro" id="IPR020595">
    <property type="entry name" value="MnmG-rel_CS"/>
</dbReference>
<dbReference type="InterPro" id="IPR040131">
    <property type="entry name" value="MnmG_N"/>
</dbReference>
<dbReference type="InterPro" id="IPR004417">
    <property type="entry name" value="TrmFO"/>
</dbReference>
<dbReference type="NCBIfam" id="TIGR00137">
    <property type="entry name" value="gid_trmFO"/>
    <property type="match status" value="1"/>
</dbReference>
<dbReference type="NCBIfam" id="NF003739">
    <property type="entry name" value="PRK05335.1"/>
    <property type="match status" value="1"/>
</dbReference>
<dbReference type="PANTHER" id="PTHR11806">
    <property type="entry name" value="GLUCOSE INHIBITED DIVISION PROTEIN A"/>
    <property type="match status" value="1"/>
</dbReference>
<dbReference type="PANTHER" id="PTHR11806:SF2">
    <property type="entry name" value="METHYLENETETRAHYDROFOLATE--TRNA-(URACIL-5-)-METHYLTRANSFERASE TRMFO"/>
    <property type="match status" value="1"/>
</dbReference>
<dbReference type="Pfam" id="PF01134">
    <property type="entry name" value="GIDA"/>
    <property type="match status" value="1"/>
</dbReference>
<dbReference type="SUPFAM" id="SSF51905">
    <property type="entry name" value="FAD/NAD(P)-binding domain"/>
    <property type="match status" value="1"/>
</dbReference>
<dbReference type="PROSITE" id="PS01281">
    <property type="entry name" value="GIDA_2"/>
    <property type="match status" value="1"/>
</dbReference>
<feature type="chain" id="PRO_1000063925" description="Methylenetetrahydrofolate--tRNA-(uracil-5-)-methyltransferase TrmFO">
    <location>
        <begin position="1"/>
        <end position="444"/>
    </location>
</feature>
<feature type="binding site" evidence="1">
    <location>
        <begin position="9"/>
        <end position="14"/>
    </location>
    <ligand>
        <name>FAD</name>
        <dbReference type="ChEBI" id="CHEBI:57692"/>
    </ligand>
</feature>
<keyword id="KW-0963">Cytoplasm</keyword>
<keyword id="KW-0274">FAD</keyword>
<keyword id="KW-0285">Flavoprotein</keyword>
<keyword id="KW-0489">Methyltransferase</keyword>
<keyword id="KW-0520">NAD</keyword>
<keyword id="KW-0521">NADP</keyword>
<keyword id="KW-0808">Transferase</keyword>
<keyword id="KW-0819">tRNA processing</keyword>
<evidence type="ECO:0000255" key="1">
    <source>
        <dbReference type="HAMAP-Rule" id="MF_01037"/>
    </source>
</evidence>
<sequence>MAECLHIVGAGMAGSEAAWQAAEMGVPVVLHEMRPKVGTFAHRTGQFAEMVCSNSFRSDDDERNAVGLLHWEMRAARGLIMEMAAAHRLPAGGALAVDRDPFAESVTARLRAHPLISVVEEEVAELPSSGNWIVATGPLTSSALAESLRALTGAEALAFFDAIAPIVYAETIDMEVAWRQSRYDKGETEDERTAYINCPMNREQYEAFIDALLAAEKTEFHEGETAGYFDGCLPIEVMAERGRETLRHGPMKPVGLTNSHRPAEKAYAVVQLRRDNKLGTLYNIVGFQTKMKYGAQTAVFKMIPGLENASFARLGGIHRNTFLNSPTLLDDRMRLKLRPNIRFAGQVTGVEGYVESAAMGLLAGRMAAAEILGRDLPPPPPETAMGALVTHITGGAEAKSFQPMNVNFGLFPPIDARGGRRGRKDRYKAYTDRAKAAFTEWLGA</sequence>
<reference key="1">
    <citation type="submission" date="2007-02" db="EMBL/GenBank/DDBJ databases">
        <title>Complete sequence of chromosome 1 of Rhodobacter sphaeroides ATCC 17029.</title>
        <authorList>
            <person name="Copeland A."/>
            <person name="Lucas S."/>
            <person name="Lapidus A."/>
            <person name="Barry K."/>
            <person name="Detter J.C."/>
            <person name="Glavina del Rio T."/>
            <person name="Hammon N."/>
            <person name="Israni S."/>
            <person name="Dalin E."/>
            <person name="Tice H."/>
            <person name="Pitluck S."/>
            <person name="Kiss H."/>
            <person name="Brettin T."/>
            <person name="Bruce D."/>
            <person name="Han C."/>
            <person name="Tapia R."/>
            <person name="Gilna P."/>
            <person name="Schmutz J."/>
            <person name="Larimer F."/>
            <person name="Land M."/>
            <person name="Hauser L."/>
            <person name="Kyrpides N."/>
            <person name="Mikhailova N."/>
            <person name="Richardson P."/>
            <person name="Mackenzie C."/>
            <person name="Choudhary M."/>
            <person name="Donohue T.J."/>
            <person name="Kaplan S."/>
        </authorList>
    </citation>
    <scope>NUCLEOTIDE SEQUENCE [LARGE SCALE GENOMIC DNA]</scope>
    <source>
        <strain>ATCC 17029 / ATH 2.4.9</strain>
    </source>
</reference>
<name>TRMFO_CERS1</name>